<gene>
    <name evidence="1" type="primary">ureD</name>
    <name type="ordered locus">Npun_F0822</name>
</gene>
<organism>
    <name type="scientific">Nostoc punctiforme (strain ATCC 29133 / PCC 73102)</name>
    <dbReference type="NCBI Taxonomy" id="63737"/>
    <lineage>
        <taxon>Bacteria</taxon>
        <taxon>Bacillati</taxon>
        <taxon>Cyanobacteriota</taxon>
        <taxon>Cyanophyceae</taxon>
        <taxon>Nostocales</taxon>
        <taxon>Nostocaceae</taxon>
        <taxon>Nostoc</taxon>
    </lineage>
</organism>
<accession>B2IT63</accession>
<evidence type="ECO:0000255" key="1">
    <source>
        <dbReference type="HAMAP-Rule" id="MF_01384"/>
    </source>
</evidence>
<sequence>MICNSQIAEGWHGKLNLVYADRQGATQLIYNQQQAPLKVQRPFYPEAEKVCHSVILHTAGGMVGGDRLSSNIHLQPQAQALITTAAASKIYRSNGLQARQTIQMQVDPGACLEWLPQETILFNDAIYRQDLRVELATGASWLGWEITRFGRSARGEKFLQGEWRSHTEIWQQSVPLWIDRQCLRGSEDIFHSPHGLAGKPIVGSLVWVGGAVSAEIVEKTRSLWNGEGEVGASRLQHGLLCRYRGSSTSEVRNWFIDVWQLLRVSFLNRGNCIPRVWQV</sequence>
<protein>
    <recommendedName>
        <fullName evidence="1">Urease accessory protein UreD</fullName>
    </recommendedName>
</protein>
<comment type="function">
    <text evidence="1">Required for maturation of urease via the functional incorporation of the urease nickel metallocenter.</text>
</comment>
<comment type="subunit">
    <text evidence="1">UreD, UreF and UreG form a complex that acts as a GTP-hydrolysis-dependent molecular chaperone, activating the urease apoprotein by helping to assemble the nickel containing metallocenter of UreC. The UreE protein probably delivers the nickel.</text>
</comment>
<comment type="subcellular location">
    <subcellularLocation>
        <location evidence="1">Cytoplasm</location>
    </subcellularLocation>
</comment>
<comment type="similarity">
    <text evidence="1">Belongs to the UreD family.</text>
</comment>
<keyword id="KW-0143">Chaperone</keyword>
<keyword id="KW-0963">Cytoplasm</keyword>
<keyword id="KW-0533">Nickel</keyword>
<keyword id="KW-1185">Reference proteome</keyword>
<feature type="chain" id="PRO_0000346583" description="Urease accessory protein UreD">
    <location>
        <begin position="1"/>
        <end position="279"/>
    </location>
</feature>
<dbReference type="EMBL" id="CP001037">
    <property type="protein sequence ID" value="ACC79561.1"/>
    <property type="molecule type" value="Genomic_DNA"/>
</dbReference>
<dbReference type="RefSeq" id="WP_012407583.1">
    <property type="nucleotide sequence ID" value="NC_010628.1"/>
</dbReference>
<dbReference type="SMR" id="B2IT63"/>
<dbReference type="STRING" id="63737.Npun_F0822"/>
<dbReference type="EnsemblBacteria" id="ACC79561">
    <property type="protein sequence ID" value="ACC79561"/>
    <property type="gene ID" value="Npun_F0822"/>
</dbReference>
<dbReference type="KEGG" id="npu:Npun_F0822"/>
<dbReference type="eggNOG" id="COG0829">
    <property type="taxonomic scope" value="Bacteria"/>
</dbReference>
<dbReference type="HOGENOM" id="CLU_056339_0_0_3"/>
<dbReference type="OrthoDB" id="9798842at2"/>
<dbReference type="PhylomeDB" id="B2IT63"/>
<dbReference type="Proteomes" id="UP000001191">
    <property type="component" value="Chromosome"/>
</dbReference>
<dbReference type="GO" id="GO:0005737">
    <property type="term" value="C:cytoplasm"/>
    <property type="evidence" value="ECO:0007669"/>
    <property type="project" value="UniProtKB-SubCell"/>
</dbReference>
<dbReference type="GO" id="GO:0016151">
    <property type="term" value="F:nickel cation binding"/>
    <property type="evidence" value="ECO:0007669"/>
    <property type="project" value="UniProtKB-UniRule"/>
</dbReference>
<dbReference type="HAMAP" id="MF_01384">
    <property type="entry name" value="UreD"/>
    <property type="match status" value="1"/>
</dbReference>
<dbReference type="InterPro" id="IPR002669">
    <property type="entry name" value="UreD"/>
</dbReference>
<dbReference type="PANTHER" id="PTHR33643">
    <property type="entry name" value="UREASE ACCESSORY PROTEIN D"/>
    <property type="match status" value="1"/>
</dbReference>
<dbReference type="PANTHER" id="PTHR33643:SF1">
    <property type="entry name" value="UREASE ACCESSORY PROTEIN D"/>
    <property type="match status" value="1"/>
</dbReference>
<dbReference type="Pfam" id="PF01774">
    <property type="entry name" value="UreD"/>
    <property type="match status" value="1"/>
</dbReference>
<proteinExistence type="inferred from homology"/>
<reference key="1">
    <citation type="journal article" date="2013" name="Plant Physiol.">
        <title>A Nostoc punctiforme Sugar Transporter Necessary to Establish a Cyanobacterium-Plant Symbiosis.</title>
        <authorList>
            <person name="Ekman M."/>
            <person name="Picossi S."/>
            <person name="Campbell E.L."/>
            <person name="Meeks J.C."/>
            <person name="Flores E."/>
        </authorList>
    </citation>
    <scope>NUCLEOTIDE SEQUENCE [LARGE SCALE GENOMIC DNA]</scope>
    <source>
        <strain>ATCC 29133 / PCC 73102</strain>
    </source>
</reference>
<name>URED_NOSP7</name>